<sequence>MTKQEKAENQEKPTEETVEETPKKETPFEPVMEADEVEETTEAQAPVEEADDKLAELQKKYDAMEDSFLRSQAEIKNIQMRNQKEQANLLKYDGQSLAKDVLPVLDNLERALAAEATDESAESLKKGVQMTYDHMKHALEDHGVKEIEAQGQAFDPTIHQAVQTVAVDGDQKADTVVQVFQKGYYLKDRVLRPAMVVVAQ</sequence>
<gene>
    <name evidence="1" type="primary">grpE</name>
    <name type="ordered locus">LCA_1237</name>
</gene>
<keyword id="KW-0143">Chaperone</keyword>
<keyword id="KW-0963">Cytoplasm</keyword>
<keyword id="KW-1185">Reference proteome</keyword>
<keyword id="KW-0346">Stress response</keyword>
<organism>
    <name type="scientific">Latilactobacillus sakei subsp. sakei (strain 23K)</name>
    <name type="common">Lactobacillus sakei subsp. sakei</name>
    <dbReference type="NCBI Taxonomy" id="314315"/>
    <lineage>
        <taxon>Bacteria</taxon>
        <taxon>Bacillati</taxon>
        <taxon>Bacillota</taxon>
        <taxon>Bacilli</taxon>
        <taxon>Lactobacillales</taxon>
        <taxon>Lactobacillaceae</taxon>
        <taxon>Latilactobacillus</taxon>
    </lineage>
</organism>
<dbReference type="EMBL" id="CR936503">
    <property type="protein sequence ID" value="CAI55541.1"/>
    <property type="molecule type" value="Genomic_DNA"/>
</dbReference>
<dbReference type="RefSeq" id="WP_011374934.1">
    <property type="nucleotide sequence ID" value="NC_007576.1"/>
</dbReference>
<dbReference type="SMR" id="Q38W92"/>
<dbReference type="STRING" id="314315.LCA_1237"/>
<dbReference type="KEGG" id="lsa:LCA_1237"/>
<dbReference type="eggNOG" id="COG0576">
    <property type="taxonomic scope" value="Bacteria"/>
</dbReference>
<dbReference type="HOGENOM" id="CLU_057217_6_3_9"/>
<dbReference type="OrthoDB" id="9812586at2"/>
<dbReference type="Proteomes" id="UP000002707">
    <property type="component" value="Chromosome"/>
</dbReference>
<dbReference type="GO" id="GO:0005737">
    <property type="term" value="C:cytoplasm"/>
    <property type="evidence" value="ECO:0007669"/>
    <property type="project" value="UniProtKB-SubCell"/>
</dbReference>
<dbReference type="GO" id="GO:0000774">
    <property type="term" value="F:adenyl-nucleotide exchange factor activity"/>
    <property type="evidence" value="ECO:0007669"/>
    <property type="project" value="InterPro"/>
</dbReference>
<dbReference type="GO" id="GO:0042803">
    <property type="term" value="F:protein homodimerization activity"/>
    <property type="evidence" value="ECO:0007669"/>
    <property type="project" value="InterPro"/>
</dbReference>
<dbReference type="GO" id="GO:0051087">
    <property type="term" value="F:protein-folding chaperone binding"/>
    <property type="evidence" value="ECO:0007669"/>
    <property type="project" value="InterPro"/>
</dbReference>
<dbReference type="GO" id="GO:0051082">
    <property type="term" value="F:unfolded protein binding"/>
    <property type="evidence" value="ECO:0007669"/>
    <property type="project" value="TreeGrafter"/>
</dbReference>
<dbReference type="GO" id="GO:0006457">
    <property type="term" value="P:protein folding"/>
    <property type="evidence" value="ECO:0007669"/>
    <property type="project" value="InterPro"/>
</dbReference>
<dbReference type="CDD" id="cd00446">
    <property type="entry name" value="GrpE"/>
    <property type="match status" value="1"/>
</dbReference>
<dbReference type="FunFam" id="2.30.22.10:FF:000001">
    <property type="entry name" value="Protein GrpE"/>
    <property type="match status" value="1"/>
</dbReference>
<dbReference type="Gene3D" id="3.90.20.20">
    <property type="match status" value="1"/>
</dbReference>
<dbReference type="Gene3D" id="2.30.22.10">
    <property type="entry name" value="Head domain of nucleotide exchange factor GrpE"/>
    <property type="match status" value="1"/>
</dbReference>
<dbReference type="HAMAP" id="MF_01151">
    <property type="entry name" value="GrpE"/>
    <property type="match status" value="1"/>
</dbReference>
<dbReference type="InterPro" id="IPR000740">
    <property type="entry name" value="GrpE"/>
</dbReference>
<dbReference type="InterPro" id="IPR013805">
    <property type="entry name" value="GrpE_coiled_coil"/>
</dbReference>
<dbReference type="InterPro" id="IPR009012">
    <property type="entry name" value="GrpE_head"/>
</dbReference>
<dbReference type="NCBIfam" id="NF010738">
    <property type="entry name" value="PRK14140.1"/>
    <property type="match status" value="1"/>
</dbReference>
<dbReference type="NCBIfam" id="NF010759">
    <property type="entry name" value="PRK14162.1"/>
    <property type="match status" value="1"/>
</dbReference>
<dbReference type="PANTHER" id="PTHR21237">
    <property type="entry name" value="GRPE PROTEIN"/>
    <property type="match status" value="1"/>
</dbReference>
<dbReference type="PANTHER" id="PTHR21237:SF23">
    <property type="entry name" value="GRPE PROTEIN HOMOLOG, MITOCHONDRIAL"/>
    <property type="match status" value="1"/>
</dbReference>
<dbReference type="Pfam" id="PF01025">
    <property type="entry name" value="GrpE"/>
    <property type="match status" value="1"/>
</dbReference>
<dbReference type="PRINTS" id="PR00773">
    <property type="entry name" value="GRPEPROTEIN"/>
</dbReference>
<dbReference type="SUPFAM" id="SSF58014">
    <property type="entry name" value="Coiled-coil domain of nucleotide exchange factor GrpE"/>
    <property type="match status" value="1"/>
</dbReference>
<dbReference type="SUPFAM" id="SSF51064">
    <property type="entry name" value="Head domain of nucleotide exchange factor GrpE"/>
    <property type="match status" value="1"/>
</dbReference>
<dbReference type="PROSITE" id="PS01071">
    <property type="entry name" value="GRPE"/>
    <property type="match status" value="1"/>
</dbReference>
<comment type="function">
    <text evidence="1">Participates actively in the response to hyperosmotic and heat shock by preventing the aggregation of stress-denatured proteins, in association with DnaK and GrpE. It is the nucleotide exchange factor for DnaK and may function as a thermosensor. Unfolded proteins bind initially to DnaJ; upon interaction with the DnaJ-bound protein, DnaK hydrolyzes its bound ATP, resulting in the formation of a stable complex. GrpE releases ADP from DnaK; ATP binding to DnaK triggers the release of the substrate protein, thus completing the reaction cycle. Several rounds of ATP-dependent interactions between DnaJ, DnaK and GrpE are required for fully efficient folding.</text>
</comment>
<comment type="subunit">
    <text evidence="1">Homodimer.</text>
</comment>
<comment type="subcellular location">
    <subcellularLocation>
        <location evidence="1">Cytoplasm</location>
    </subcellularLocation>
</comment>
<comment type="similarity">
    <text evidence="1">Belongs to the GrpE family.</text>
</comment>
<accession>Q38W92</accession>
<evidence type="ECO:0000255" key="1">
    <source>
        <dbReference type="HAMAP-Rule" id="MF_01151"/>
    </source>
</evidence>
<evidence type="ECO:0000256" key="2">
    <source>
        <dbReference type="SAM" id="MobiDB-lite"/>
    </source>
</evidence>
<feature type="chain" id="PRO_1000053594" description="Protein GrpE">
    <location>
        <begin position="1"/>
        <end position="200"/>
    </location>
</feature>
<feature type="region of interest" description="Disordered" evidence="2">
    <location>
        <begin position="1"/>
        <end position="50"/>
    </location>
</feature>
<feature type="compositionally biased region" description="Basic and acidic residues" evidence="2">
    <location>
        <begin position="1"/>
        <end position="27"/>
    </location>
</feature>
<feature type="compositionally biased region" description="Acidic residues" evidence="2">
    <location>
        <begin position="32"/>
        <end position="41"/>
    </location>
</feature>
<reference key="1">
    <citation type="journal article" date="2005" name="Nat. Biotechnol.">
        <title>The complete genome sequence of the meat-borne lactic acid bacterium Lactobacillus sakei 23K.</title>
        <authorList>
            <person name="Chaillou S."/>
            <person name="Champomier-Verges M.-C."/>
            <person name="Cornet M."/>
            <person name="Crutz-Le Coq A.-M."/>
            <person name="Dudez A.-M."/>
            <person name="Martin V."/>
            <person name="Beaufils S."/>
            <person name="Darbon-Rongere E."/>
            <person name="Bossy R."/>
            <person name="Loux V."/>
            <person name="Zagorec M."/>
        </authorList>
    </citation>
    <scope>NUCLEOTIDE SEQUENCE [LARGE SCALE GENOMIC DNA]</scope>
    <source>
        <strain>23K</strain>
    </source>
</reference>
<name>GRPE_LATSS</name>
<proteinExistence type="inferred from homology"/>
<protein>
    <recommendedName>
        <fullName evidence="1">Protein GrpE</fullName>
    </recommendedName>
    <alternativeName>
        <fullName evidence="1">HSP-70 cofactor</fullName>
    </alternativeName>
</protein>